<proteinExistence type="inferred from homology"/>
<comment type="function">
    <text evidence="1">Catalyzes the cleavage of L-kynurenine (L-Kyn) and L-3-hydroxykynurenine (L-3OHKyn) into anthranilic acid (AA) and 3-hydroxyanthranilic acid (3-OHAA), respectively.</text>
</comment>
<comment type="catalytic activity">
    <reaction evidence="1">
        <text>L-kynurenine + H2O = anthranilate + L-alanine + H(+)</text>
        <dbReference type="Rhea" id="RHEA:16813"/>
        <dbReference type="ChEBI" id="CHEBI:15377"/>
        <dbReference type="ChEBI" id="CHEBI:15378"/>
        <dbReference type="ChEBI" id="CHEBI:16567"/>
        <dbReference type="ChEBI" id="CHEBI:57959"/>
        <dbReference type="ChEBI" id="CHEBI:57972"/>
        <dbReference type="EC" id="3.7.1.3"/>
    </reaction>
</comment>
<comment type="catalytic activity">
    <reaction evidence="1">
        <text>3-hydroxy-L-kynurenine + H2O = 3-hydroxyanthranilate + L-alanine + H(+)</text>
        <dbReference type="Rhea" id="RHEA:25143"/>
        <dbReference type="ChEBI" id="CHEBI:15377"/>
        <dbReference type="ChEBI" id="CHEBI:15378"/>
        <dbReference type="ChEBI" id="CHEBI:36559"/>
        <dbReference type="ChEBI" id="CHEBI:57972"/>
        <dbReference type="ChEBI" id="CHEBI:58125"/>
        <dbReference type="EC" id="3.7.1.3"/>
    </reaction>
</comment>
<comment type="cofactor">
    <cofactor evidence="1">
        <name>pyridoxal 5'-phosphate</name>
        <dbReference type="ChEBI" id="CHEBI:597326"/>
    </cofactor>
</comment>
<comment type="pathway">
    <text evidence="1">Amino-acid degradation; L-kynurenine degradation; L-alanine and anthranilate from L-kynurenine: step 1/1.</text>
</comment>
<comment type="pathway">
    <text evidence="1">Cofactor biosynthesis; NAD(+) biosynthesis; quinolinate from L-kynurenine: step 2/3.</text>
</comment>
<comment type="subunit">
    <text evidence="1">Homodimer.</text>
</comment>
<comment type="subcellular location">
    <subcellularLocation>
        <location evidence="1">Cytoplasm</location>
    </subcellularLocation>
</comment>
<comment type="similarity">
    <text evidence="1">Belongs to the kynureninase family.</text>
</comment>
<reference key="1">
    <citation type="submission" date="2005-09" db="EMBL/GenBank/DDBJ databases">
        <title>Annotation of the Aspergillus terreus NIH2624 genome.</title>
        <authorList>
            <person name="Birren B.W."/>
            <person name="Lander E.S."/>
            <person name="Galagan J.E."/>
            <person name="Nusbaum C."/>
            <person name="Devon K."/>
            <person name="Henn M."/>
            <person name="Ma L.-J."/>
            <person name="Jaffe D.B."/>
            <person name="Butler J."/>
            <person name="Alvarez P."/>
            <person name="Gnerre S."/>
            <person name="Grabherr M."/>
            <person name="Kleber M."/>
            <person name="Mauceli E.W."/>
            <person name="Brockman W."/>
            <person name="Rounsley S."/>
            <person name="Young S.K."/>
            <person name="LaButti K."/>
            <person name="Pushparaj V."/>
            <person name="DeCaprio D."/>
            <person name="Crawford M."/>
            <person name="Koehrsen M."/>
            <person name="Engels R."/>
            <person name="Montgomery P."/>
            <person name="Pearson M."/>
            <person name="Howarth C."/>
            <person name="Larson L."/>
            <person name="Luoma S."/>
            <person name="White J."/>
            <person name="Alvarado L."/>
            <person name="Kodira C.D."/>
            <person name="Zeng Q."/>
            <person name="Oleary S."/>
            <person name="Yandava C."/>
            <person name="Denning D.W."/>
            <person name="Nierman W.C."/>
            <person name="Milne T."/>
            <person name="Madden K."/>
        </authorList>
    </citation>
    <scope>NUCLEOTIDE SEQUENCE [LARGE SCALE GENOMIC DNA]</scope>
    <source>
        <strain>NIH 2624 / FGSC A1156</strain>
    </source>
</reference>
<dbReference type="EC" id="3.7.1.3" evidence="1"/>
<dbReference type="EMBL" id="CH476594">
    <property type="protein sequence ID" value="EAU39404.1"/>
    <property type="molecule type" value="Genomic_DNA"/>
</dbReference>
<dbReference type="RefSeq" id="XP_001210844.1">
    <property type="nucleotide sequence ID" value="XM_001210844.1"/>
</dbReference>
<dbReference type="SMR" id="Q0CZX6"/>
<dbReference type="STRING" id="341663.Q0CZX6"/>
<dbReference type="EnsemblFungi" id="EAU39404">
    <property type="protein sequence ID" value="EAU39404"/>
    <property type="gene ID" value="ATEG_00758"/>
</dbReference>
<dbReference type="GeneID" id="4355513"/>
<dbReference type="VEuPathDB" id="FungiDB:ATEG_00758"/>
<dbReference type="eggNOG" id="KOG3846">
    <property type="taxonomic scope" value="Eukaryota"/>
</dbReference>
<dbReference type="HOGENOM" id="CLU_003433_4_0_1"/>
<dbReference type="OMA" id="SHVAYRS"/>
<dbReference type="OrthoDB" id="5978656at2759"/>
<dbReference type="UniPathway" id="UPA00253">
    <property type="reaction ID" value="UER00329"/>
</dbReference>
<dbReference type="UniPathway" id="UPA00334">
    <property type="reaction ID" value="UER00455"/>
</dbReference>
<dbReference type="Proteomes" id="UP000007963">
    <property type="component" value="Unassembled WGS sequence"/>
</dbReference>
<dbReference type="GO" id="GO:0005737">
    <property type="term" value="C:cytoplasm"/>
    <property type="evidence" value="ECO:0007669"/>
    <property type="project" value="UniProtKB-SubCell"/>
</dbReference>
<dbReference type="GO" id="GO:0030429">
    <property type="term" value="F:kynureninase activity"/>
    <property type="evidence" value="ECO:0007669"/>
    <property type="project" value="UniProtKB-UniRule"/>
</dbReference>
<dbReference type="GO" id="GO:0030170">
    <property type="term" value="F:pyridoxal phosphate binding"/>
    <property type="evidence" value="ECO:0007669"/>
    <property type="project" value="UniProtKB-UniRule"/>
</dbReference>
<dbReference type="GO" id="GO:0034354">
    <property type="term" value="P:'de novo' NAD biosynthetic process from L-tryptophan"/>
    <property type="evidence" value="ECO:0007669"/>
    <property type="project" value="UniProtKB-UniRule"/>
</dbReference>
<dbReference type="GO" id="GO:0043420">
    <property type="term" value="P:anthranilate metabolic process"/>
    <property type="evidence" value="ECO:0007669"/>
    <property type="project" value="UniProtKB-UniRule"/>
</dbReference>
<dbReference type="GO" id="GO:0097053">
    <property type="term" value="P:L-kynurenine catabolic process"/>
    <property type="evidence" value="ECO:0007669"/>
    <property type="project" value="UniProtKB-UniRule"/>
</dbReference>
<dbReference type="GO" id="GO:0019441">
    <property type="term" value="P:L-tryptophan catabolic process to kynurenine"/>
    <property type="evidence" value="ECO:0007669"/>
    <property type="project" value="TreeGrafter"/>
</dbReference>
<dbReference type="GO" id="GO:0019805">
    <property type="term" value="P:quinolinate biosynthetic process"/>
    <property type="evidence" value="ECO:0007669"/>
    <property type="project" value="UniProtKB-UniRule"/>
</dbReference>
<dbReference type="FunFam" id="3.40.640.10:FF:000031">
    <property type="entry name" value="Kynureninase"/>
    <property type="match status" value="1"/>
</dbReference>
<dbReference type="Gene3D" id="3.90.1150.10">
    <property type="entry name" value="Aspartate Aminotransferase, domain 1"/>
    <property type="match status" value="1"/>
</dbReference>
<dbReference type="Gene3D" id="3.40.640.10">
    <property type="entry name" value="Type I PLP-dependent aspartate aminotransferase-like (Major domain)"/>
    <property type="match status" value="1"/>
</dbReference>
<dbReference type="HAMAP" id="MF_01970">
    <property type="entry name" value="Kynureninase"/>
    <property type="match status" value="1"/>
</dbReference>
<dbReference type="InterPro" id="IPR000192">
    <property type="entry name" value="Aminotrans_V_dom"/>
</dbReference>
<dbReference type="InterPro" id="IPR010111">
    <property type="entry name" value="Kynureninase"/>
</dbReference>
<dbReference type="InterPro" id="IPR015424">
    <property type="entry name" value="PyrdxlP-dep_Trfase"/>
</dbReference>
<dbReference type="InterPro" id="IPR015421">
    <property type="entry name" value="PyrdxlP-dep_Trfase_major"/>
</dbReference>
<dbReference type="InterPro" id="IPR015422">
    <property type="entry name" value="PyrdxlP-dep_Trfase_small"/>
</dbReference>
<dbReference type="NCBIfam" id="TIGR01814">
    <property type="entry name" value="kynureninase"/>
    <property type="match status" value="1"/>
</dbReference>
<dbReference type="PANTHER" id="PTHR14084">
    <property type="entry name" value="KYNURENINASE"/>
    <property type="match status" value="1"/>
</dbReference>
<dbReference type="PANTHER" id="PTHR14084:SF2">
    <property type="entry name" value="KYNURENINASE 2"/>
    <property type="match status" value="1"/>
</dbReference>
<dbReference type="Pfam" id="PF00266">
    <property type="entry name" value="Aminotran_5"/>
    <property type="match status" value="1"/>
</dbReference>
<dbReference type="Pfam" id="PF22580">
    <property type="entry name" value="KYNU_C"/>
    <property type="match status" value="1"/>
</dbReference>
<dbReference type="PIRSF" id="PIRSF038800">
    <property type="entry name" value="KYNU"/>
    <property type="match status" value="1"/>
</dbReference>
<dbReference type="SUPFAM" id="SSF53383">
    <property type="entry name" value="PLP-dependent transferases"/>
    <property type="match status" value="1"/>
</dbReference>
<organism>
    <name type="scientific">Aspergillus terreus (strain NIH 2624 / FGSC A1156)</name>
    <dbReference type="NCBI Taxonomy" id="341663"/>
    <lineage>
        <taxon>Eukaryota</taxon>
        <taxon>Fungi</taxon>
        <taxon>Dikarya</taxon>
        <taxon>Ascomycota</taxon>
        <taxon>Pezizomycotina</taxon>
        <taxon>Eurotiomycetes</taxon>
        <taxon>Eurotiomycetidae</taxon>
        <taxon>Eurotiales</taxon>
        <taxon>Aspergillaceae</taxon>
        <taxon>Aspergillus</taxon>
        <taxon>Aspergillus subgen. Circumdati</taxon>
    </lineage>
</organism>
<keyword id="KW-0963">Cytoplasm</keyword>
<keyword id="KW-0378">Hydrolase</keyword>
<keyword id="KW-0662">Pyridine nucleotide biosynthesis</keyword>
<keyword id="KW-0663">Pyridoxal phosphate</keyword>
<keyword id="KW-1185">Reference proteome</keyword>
<evidence type="ECO:0000255" key="1">
    <source>
        <dbReference type="HAMAP-Rule" id="MF_03017"/>
    </source>
</evidence>
<name>KYNU2_ASPTN</name>
<feature type="chain" id="PRO_0000356972" description="Kynureninase 2">
    <location>
        <begin position="1"/>
        <end position="463"/>
    </location>
</feature>
<feature type="binding site" evidence="1">
    <location>
        <position position="134"/>
    </location>
    <ligand>
        <name>pyridoxal 5'-phosphate</name>
        <dbReference type="ChEBI" id="CHEBI:597326"/>
    </ligand>
</feature>
<feature type="binding site" evidence="1">
    <location>
        <position position="135"/>
    </location>
    <ligand>
        <name>pyridoxal 5'-phosphate</name>
        <dbReference type="ChEBI" id="CHEBI:597326"/>
    </ligand>
</feature>
<feature type="binding site" evidence="1">
    <location>
        <begin position="162"/>
        <end position="165"/>
    </location>
    <ligand>
        <name>pyridoxal 5'-phosphate</name>
        <dbReference type="ChEBI" id="CHEBI:597326"/>
    </ligand>
</feature>
<feature type="binding site" evidence="1">
    <location>
        <position position="247"/>
    </location>
    <ligand>
        <name>pyridoxal 5'-phosphate</name>
        <dbReference type="ChEBI" id="CHEBI:597326"/>
    </ligand>
</feature>
<feature type="binding site" evidence="1">
    <location>
        <position position="250"/>
    </location>
    <ligand>
        <name>pyridoxal 5'-phosphate</name>
        <dbReference type="ChEBI" id="CHEBI:597326"/>
    </ligand>
</feature>
<feature type="binding site" evidence="1">
    <location>
        <position position="272"/>
    </location>
    <ligand>
        <name>pyridoxal 5'-phosphate</name>
        <dbReference type="ChEBI" id="CHEBI:597326"/>
    </ligand>
</feature>
<feature type="binding site" evidence="1">
    <location>
        <position position="312"/>
    </location>
    <ligand>
        <name>pyridoxal 5'-phosphate</name>
        <dbReference type="ChEBI" id="CHEBI:597326"/>
    </ligand>
</feature>
<feature type="binding site" evidence="1">
    <location>
        <position position="340"/>
    </location>
    <ligand>
        <name>pyridoxal 5'-phosphate</name>
        <dbReference type="ChEBI" id="CHEBI:597326"/>
    </ligand>
</feature>
<feature type="modified residue" description="N6-(pyridoxal phosphate)lysine" evidence="1">
    <location>
        <position position="273"/>
    </location>
</feature>
<protein>
    <recommendedName>
        <fullName evidence="1">Kynureninase 2</fullName>
        <ecNumber evidence="1">3.7.1.3</ecNumber>
    </recommendedName>
    <alternativeName>
        <fullName evidence="1">Biosynthesis of nicotinic acid protein 5-2</fullName>
    </alternativeName>
    <alternativeName>
        <fullName evidence="1">L-kynurenine hydrolase 2</fullName>
    </alternativeName>
</protein>
<gene>
    <name type="primary">bna5-2</name>
    <name type="ORF">ATEG_00758</name>
</gene>
<accession>Q0CZX6</accession>
<sequence length="463" mass="51310">MSENNCSKPSFPDNAASKEYAASLDAADPLASFRDQFIIPSKANIACKRLAKPNLSPEPCIYFCGNSLGIQPKATAKYLEAQLDTWSSIGVCGHFTNLEDSPMKSWQLLAEQAAESMSKIVGADPAEVAAMGTLTANLHLLMASFYKPTATKHKILMDWKAFPSDHYAIESHIAWHNLDPKESMVLIGPDEGEYEISTDKILSYIDQHAEDAALLLLPGIQYYTGQLFDIPKITEYAKSRNLVVGWDLAHAYGNVELKLHDWNVDFAAWCTYKYGNAGPGAMAGLFVHDKHGQVDYSQGEDSPKFRHRLTGWYGGDRSVRFKMDNKFKPIPGAGGFQISNPSAIDLSCLCAALSVFDQTSVSELRRKSLKLTAYLEYLLLKDTTEDSRPFRIITPTNPEARGAQLSLLLKPGLLQGVSERLQDAGIICDKREPGVVRVAPVPLYNTYSEVWEFVQQFRAALQL</sequence>